<keyword id="KW-0131">Cell cycle</keyword>
<keyword id="KW-0132">Cell division</keyword>
<keyword id="KW-0997">Cell inner membrane</keyword>
<keyword id="KW-1003">Cell membrane</keyword>
<keyword id="KW-0133">Cell shape</keyword>
<keyword id="KW-0961">Cell wall biogenesis/degradation</keyword>
<keyword id="KW-0460">Magnesium</keyword>
<keyword id="KW-0472">Membrane</keyword>
<keyword id="KW-0479">Metal-binding</keyword>
<keyword id="KW-0573">Peptidoglycan synthesis</keyword>
<keyword id="KW-0808">Transferase</keyword>
<keyword id="KW-0812">Transmembrane</keyword>
<keyword id="KW-1133">Transmembrane helix</keyword>
<proteinExistence type="inferred from homology"/>
<protein>
    <recommendedName>
        <fullName evidence="1">Phospho-N-acetylmuramoyl-pentapeptide-transferase</fullName>
        <ecNumber evidence="1">2.7.8.13</ecNumber>
    </recommendedName>
    <alternativeName>
        <fullName evidence="1">UDP-MurNAc-pentapeptide phosphotransferase</fullName>
    </alternativeName>
</protein>
<feature type="chain" id="PRO_0000108870" description="Phospho-N-acetylmuramoyl-pentapeptide-transferase">
    <location>
        <begin position="1"/>
        <end position="359"/>
    </location>
</feature>
<feature type="transmembrane region" description="Helical" evidence="1">
    <location>
        <begin position="7"/>
        <end position="27"/>
    </location>
</feature>
<feature type="transmembrane region" description="Helical" evidence="1">
    <location>
        <begin position="28"/>
        <end position="48"/>
    </location>
</feature>
<feature type="transmembrane region" description="Helical" evidence="1">
    <location>
        <begin position="82"/>
        <end position="102"/>
    </location>
</feature>
<feature type="transmembrane region" description="Helical" evidence="1">
    <location>
        <begin position="103"/>
        <end position="123"/>
    </location>
</feature>
<feature type="transmembrane region" description="Helical" evidence="1">
    <location>
        <begin position="147"/>
        <end position="167"/>
    </location>
</feature>
<feature type="transmembrane region" description="Helical" evidence="1">
    <location>
        <begin position="179"/>
        <end position="199"/>
    </location>
</feature>
<feature type="transmembrane region" description="Helical" evidence="1">
    <location>
        <begin position="203"/>
        <end position="223"/>
    </location>
</feature>
<feature type="transmembrane region" description="Helical" evidence="1">
    <location>
        <begin position="229"/>
        <end position="249"/>
    </location>
</feature>
<feature type="transmembrane region" description="Helical" evidence="1">
    <location>
        <begin position="256"/>
        <end position="276"/>
    </location>
</feature>
<feature type="transmembrane region" description="Helical" evidence="1">
    <location>
        <begin position="337"/>
        <end position="357"/>
    </location>
</feature>
<dbReference type="EC" id="2.7.8.13" evidence="1"/>
<dbReference type="EMBL" id="BX548174">
    <property type="protein sequence ID" value="CAE20168.1"/>
    <property type="molecule type" value="Genomic_DNA"/>
</dbReference>
<dbReference type="SMR" id="Q7UZF8"/>
<dbReference type="STRING" id="59919.PMM1709"/>
<dbReference type="KEGG" id="pmm:PMM1709"/>
<dbReference type="eggNOG" id="COG0472">
    <property type="taxonomic scope" value="Bacteria"/>
</dbReference>
<dbReference type="HOGENOM" id="CLU_023982_0_2_3"/>
<dbReference type="UniPathway" id="UPA00219"/>
<dbReference type="Proteomes" id="UP000001026">
    <property type="component" value="Chromosome"/>
</dbReference>
<dbReference type="GO" id="GO:0005886">
    <property type="term" value="C:plasma membrane"/>
    <property type="evidence" value="ECO:0007669"/>
    <property type="project" value="UniProtKB-SubCell"/>
</dbReference>
<dbReference type="GO" id="GO:0046872">
    <property type="term" value="F:metal ion binding"/>
    <property type="evidence" value="ECO:0007669"/>
    <property type="project" value="UniProtKB-KW"/>
</dbReference>
<dbReference type="GO" id="GO:0008963">
    <property type="term" value="F:phospho-N-acetylmuramoyl-pentapeptide-transferase activity"/>
    <property type="evidence" value="ECO:0007669"/>
    <property type="project" value="UniProtKB-UniRule"/>
</dbReference>
<dbReference type="GO" id="GO:0051992">
    <property type="term" value="F:UDP-N-acetylmuramoyl-L-alanyl-D-glutamyl-meso-2,6-diaminopimelyl-D-alanyl-D-alanine:undecaprenyl-phosphate transferase activity"/>
    <property type="evidence" value="ECO:0007669"/>
    <property type="project" value="RHEA"/>
</dbReference>
<dbReference type="GO" id="GO:0051301">
    <property type="term" value="P:cell division"/>
    <property type="evidence" value="ECO:0007669"/>
    <property type="project" value="UniProtKB-KW"/>
</dbReference>
<dbReference type="GO" id="GO:0071555">
    <property type="term" value="P:cell wall organization"/>
    <property type="evidence" value="ECO:0007669"/>
    <property type="project" value="UniProtKB-KW"/>
</dbReference>
<dbReference type="GO" id="GO:0009252">
    <property type="term" value="P:peptidoglycan biosynthetic process"/>
    <property type="evidence" value="ECO:0007669"/>
    <property type="project" value="UniProtKB-UniRule"/>
</dbReference>
<dbReference type="GO" id="GO:0008360">
    <property type="term" value="P:regulation of cell shape"/>
    <property type="evidence" value="ECO:0007669"/>
    <property type="project" value="UniProtKB-KW"/>
</dbReference>
<dbReference type="CDD" id="cd06852">
    <property type="entry name" value="GT_MraY"/>
    <property type="match status" value="1"/>
</dbReference>
<dbReference type="HAMAP" id="MF_00038">
    <property type="entry name" value="MraY"/>
    <property type="match status" value="1"/>
</dbReference>
<dbReference type="InterPro" id="IPR000715">
    <property type="entry name" value="Glycosyl_transferase_4"/>
</dbReference>
<dbReference type="InterPro" id="IPR003524">
    <property type="entry name" value="PNAcMuramoyl-5peptid_Trfase"/>
</dbReference>
<dbReference type="InterPro" id="IPR018480">
    <property type="entry name" value="PNAcMuramoyl-5peptid_Trfase_CS"/>
</dbReference>
<dbReference type="NCBIfam" id="TIGR00445">
    <property type="entry name" value="mraY"/>
    <property type="match status" value="1"/>
</dbReference>
<dbReference type="PANTHER" id="PTHR22926">
    <property type="entry name" value="PHOSPHO-N-ACETYLMURAMOYL-PENTAPEPTIDE-TRANSFERASE"/>
    <property type="match status" value="1"/>
</dbReference>
<dbReference type="PANTHER" id="PTHR22926:SF5">
    <property type="entry name" value="PHOSPHO-N-ACETYLMURAMOYL-PENTAPEPTIDE-TRANSFERASE HOMOLOG"/>
    <property type="match status" value="1"/>
</dbReference>
<dbReference type="Pfam" id="PF00953">
    <property type="entry name" value="Glycos_transf_4"/>
    <property type="match status" value="1"/>
</dbReference>
<dbReference type="Pfam" id="PF10555">
    <property type="entry name" value="MraY_sig1"/>
    <property type="match status" value="1"/>
</dbReference>
<dbReference type="PROSITE" id="PS01347">
    <property type="entry name" value="MRAY_1"/>
    <property type="match status" value="1"/>
</dbReference>
<dbReference type="PROSITE" id="PS01348">
    <property type="entry name" value="MRAY_2"/>
    <property type="match status" value="1"/>
</dbReference>
<gene>
    <name evidence="1" type="primary">mraY</name>
    <name type="ordered locus">PMM1709</name>
</gene>
<evidence type="ECO:0000255" key="1">
    <source>
        <dbReference type="HAMAP-Rule" id="MF_00038"/>
    </source>
</evidence>
<accession>Q7UZF8</accession>
<name>MRAY_PROMP</name>
<organism>
    <name type="scientific">Prochlorococcus marinus subsp. pastoris (strain CCMP1986 / NIES-2087 / MED4)</name>
    <dbReference type="NCBI Taxonomy" id="59919"/>
    <lineage>
        <taxon>Bacteria</taxon>
        <taxon>Bacillati</taxon>
        <taxon>Cyanobacteriota</taxon>
        <taxon>Cyanophyceae</taxon>
        <taxon>Synechococcales</taxon>
        <taxon>Prochlorococcaceae</taxon>
        <taxon>Prochlorococcus</taxon>
    </lineage>
</organism>
<sequence>MMIGKTRSLTFTSLFFLLVISLIVNSYIFNSLLIINIFLISSLISLVITKYGFKIISRLNLLQNIRSEGPSLHFNKTNTPTMGGIFIILPFLLLLLIVNNYVDSVGILLLFFCTISFFIIGFLDDYLSIANKKNAGLKSNEKFTLQALIAVLFIIFASQSNYINPLITISNNWNMDTNIVIFPICFLTLVGLSNAVNLTDGLDGLAAGCSAIVFFGLGTEIFIKGQKDLIIYGLISYAMSGLCIGFLKYNKYPAKIFMGDTGSLTIGAALGSISILTNSFFTLFIISGIFITEALSVMIQVSFFKITKKLFKKGKRVFLMTPIHHHFELKGIKEEKIVENFWKVNILLIVLGIVLKINL</sequence>
<reference key="1">
    <citation type="journal article" date="2003" name="Nature">
        <title>Genome divergence in two Prochlorococcus ecotypes reflects oceanic niche differentiation.</title>
        <authorList>
            <person name="Rocap G."/>
            <person name="Larimer F.W."/>
            <person name="Lamerdin J.E."/>
            <person name="Malfatti S."/>
            <person name="Chain P."/>
            <person name="Ahlgren N.A."/>
            <person name="Arellano A."/>
            <person name="Coleman M."/>
            <person name="Hauser L."/>
            <person name="Hess W.R."/>
            <person name="Johnson Z.I."/>
            <person name="Land M.L."/>
            <person name="Lindell D."/>
            <person name="Post A.F."/>
            <person name="Regala W."/>
            <person name="Shah M."/>
            <person name="Shaw S.L."/>
            <person name="Steglich C."/>
            <person name="Sullivan M.B."/>
            <person name="Ting C.S."/>
            <person name="Tolonen A."/>
            <person name="Webb E.A."/>
            <person name="Zinser E.R."/>
            <person name="Chisholm S.W."/>
        </authorList>
    </citation>
    <scope>NUCLEOTIDE SEQUENCE [LARGE SCALE GENOMIC DNA]</scope>
    <source>
        <strain>CCMP1986 / NIES-2087 / MED4</strain>
    </source>
</reference>
<comment type="function">
    <text evidence="1">Catalyzes the initial step of the lipid cycle reactions in the biosynthesis of the cell wall peptidoglycan: transfers peptidoglycan precursor phospho-MurNAc-pentapeptide from UDP-MurNAc-pentapeptide onto the lipid carrier undecaprenyl phosphate, yielding undecaprenyl-pyrophosphoryl-MurNAc-pentapeptide, known as lipid I.</text>
</comment>
<comment type="catalytic activity">
    <reaction evidence="1">
        <text>UDP-N-acetyl-alpha-D-muramoyl-L-alanyl-gamma-D-glutamyl-meso-2,6-diaminopimeloyl-D-alanyl-D-alanine + di-trans,octa-cis-undecaprenyl phosphate = di-trans,octa-cis-undecaprenyl diphospho-N-acetyl-alpha-D-muramoyl-L-alanyl-D-glutamyl-meso-2,6-diaminopimeloyl-D-alanyl-D-alanine + UMP</text>
        <dbReference type="Rhea" id="RHEA:28386"/>
        <dbReference type="ChEBI" id="CHEBI:57865"/>
        <dbReference type="ChEBI" id="CHEBI:60392"/>
        <dbReference type="ChEBI" id="CHEBI:61386"/>
        <dbReference type="ChEBI" id="CHEBI:61387"/>
        <dbReference type="EC" id="2.7.8.13"/>
    </reaction>
</comment>
<comment type="cofactor">
    <cofactor evidence="1">
        <name>Mg(2+)</name>
        <dbReference type="ChEBI" id="CHEBI:18420"/>
    </cofactor>
</comment>
<comment type="pathway">
    <text evidence="1">Cell wall biogenesis; peptidoglycan biosynthesis.</text>
</comment>
<comment type="subcellular location">
    <subcellularLocation>
        <location evidence="1">Cell inner membrane</location>
        <topology evidence="1">Multi-pass membrane protein</topology>
    </subcellularLocation>
</comment>
<comment type="similarity">
    <text evidence="1">Belongs to the glycosyltransferase 4 family. MraY subfamily.</text>
</comment>